<comment type="function">
    <text evidence="1">Catalyzes the formation of 6,7-dimethyl-8-ribityllumazine by condensation of 5-amino-6-(D-ribitylamino)uracil with 3,4-dihydroxy-2-butanone 4-phosphate. This is the penultimate step in the biosynthesis of riboflavin.</text>
</comment>
<comment type="catalytic activity">
    <reaction evidence="1">
        <text>(2S)-2-hydroxy-3-oxobutyl phosphate + 5-amino-6-(D-ribitylamino)uracil = 6,7-dimethyl-8-(1-D-ribityl)lumazine + phosphate + 2 H2O + H(+)</text>
        <dbReference type="Rhea" id="RHEA:26152"/>
        <dbReference type="ChEBI" id="CHEBI:15377"/>
        <dbReference type="ChEBI" id="CHEBI:15378"/>
        <dbReference type="ChEBI" id="CHEBI:15934"/>
        <dbReference type="ChEBI" id="CHEBI:43474"/>
        <dbReference type="ChEBI" id="CHEBI:58201"/>
        <dbReference type="ChEBI" id="CHEBI:58830"/>
        <dbReference type="EC" id="2.5.1.78"/>
    </reaction>
</comment>
<comment type="pathway">
    <text evidence="1">Cofactor biosynthesis; riboflavin biosynthesis; riboflavin from 2-hydroxy-3-oxobutyl phosphate and 5-amino-6-(D-ribitylamino)uracil: step 1/2.</text>
</comment>
<comment type="similarity">
    <text evidence="1">Belongs to the DMRL synthase family.</text>
</comment>
<proteinExistence type="inferred from homology"/>
<reference key="1">
    <citation type="journal article" date="2008" name="DNA Res.">
        <title>Determination of the genome sequence of Porphyromonas gingivalis strain ATCC 33277 and genomic comparison with strain W83 revealed extensive genome rearrangements in P. gingivalis.</title>
        <authorList>
            <person name="Naito M."/>
            <person name="Hirakawa H."/>
            <person name="Yamashita A."/>
            <person name="Ohara N."/>
            <person name="Shoji M."/>
            <person name="Yukitake H."/>
            <person name="Nakayama K."/>
            <person name="Toh H."/>
            <person name="Yoshimura F."/>
            <person name="Kuhara S."/>
            <person name="Hattori M."/>
            <person name="Hayashi T."/>
            <person name="Nakayama K."/>
        </authorList>
    </citation>
    <scope>NUCLEOTIDE SEQUENCE [LARGE SCALE GENOMIC DNA]</scope>
    <source>
        <strain>ATCC 33277 / DSM 20709 / CIP 103683 / JCM 12257 / NCTC 11834 / 2561</strain>
    </source>
</reference>
<keyword id="KW-0686">Riboflavin biosynthesis</keyword>
<keyword id="KW-0808">Transferase</keyword>
<sequence length="161" mass="17343">MATAYHNLSDYDYESVPCGKDLRIGIAVAEWNHNITEPLMKGAIDTLLEHGVSADNIIVQHVPGTFELTYASAYLAEQHEVDAVIAIGCVVRGDTPHFDYICQGVTQGITQLNVDGFVPVIFGVLTTETMLQAEERAGGKHGNKGTEAAVTALKMAGLERI</sequence>
<organism>
    <name type="scientific">Porphyromonas gingivalis (strain ATCC 33277 / DSM 20709 / CIP 103683 / JCM 12257 / NCTC 11834 / 2561)</name>
    <dbReference type="NCBI Taxonomy" id="431947"/>
    <lineage>
        <taxon>Bacteria</taxon>
        <taxon>Pseudomonadati</taxon>
        <taxon>Bacteroidota</taxon>
        <taxon>Bacteroidia</taxon>
        <taxon>Bacteroidales</taxon>
        <taxon>Porphyromonadaceae</taxon>
        <taxon>Porphyromonas</taxon>
    </lineage>
</organism>
<name>RISB_PORG3</name>
<dbReference type="EC" id="2.5.1.78" evidence="1"/>
<dbReference type="EMBL" id="AP009380">
    <property type="protein sequence ID" value="BAG33420.1"/>
    <property type="molecule type" value="Genomic_DNA"/>
</dbReference>
<dbReference type="RefSeq" id="WP_012457864.1">
    <property type="nucleotide sequence ID" value="NC_010729.1"/>
</dbReference>
<dbReference type="SMR" id="B2RJ75"/>
<dbReference type="GeneID" id="29256114"/>
<dbReference type="KEGG" id="pgn:PGN_0901"/>
<dbReference type="eggNOG" id="COG0054">
    <property type="taxonomic scope" value="Bacteria"/>
</dbReference>
<dbReference type="HOGENOM" id="CLU_089358_1_2_10"/>
<dbReference type="OrthoDB" id="9809709at2"/>
<dbReference type="BioCyc" id="PGIN431947:G1G2V-993-MONOMER"/>
<dbReference type="UniPathway" id="UPA00275">
    <property type="reaction ID" value="UER00404"/>
</dbReference>
<dbReference type="Proteomes" id="UP000008842">
    <property type="component" value="Chromosome"/>
</dbReference>
<dbReference type="GO" id="GO:0005829">
    <property type="term" value="C:cytosol"/>
    <property type="evidence" value="ECO:0007669"/>
    <property type="project" value="TreeGrafter"/>
</dbReference>
<dbReference type="GO" id="GO:0009349">
    <property type="term" value="C:riboflavin synthase complex"/>
    <property type="evidence" value="ECO:0007669"/>
    <property type="project" value="InterPro"/>
</dbReference>
<dbReference type="GO" id="GO:0000906">
    <property type="term" value="F:6,7-dimethyl-8-ribityllumazine synthase activity"/>
    <property type="evidence" value="ECO:0007669"/>
    <property type="project" value="UniProtKB-UniRule"/>
</dbReference>
<dbReference type="GO" id="GO:0009231">
    <property type="term" value="P:riboflavin biosynthetic process"/>
    <property type="evidence" value="ECO:0007669"/>
    <property type="project" value="UniProtKB-UniRule"/>
</dbReference>
<dbReference type="CDD" id="cd09209">
    <property type="entry name" value="Lumazine_synthase-I"/>
    <property type="match status" value="1"/>
</dbReference>
<dbReference type="Gene3D" id="3.40.50.960">
    <property type="entry name" value="Lumazine/riboflavin synthase"/>
    <property type="match status" value="1"/>
</dbReference>
<dbReference type="HAMAP" id="MF_00178">
    <property type="entry name" value="Lumazine_synth"/>
    <property type="match status" value="1"/>
</dbReference>
<dbReference type="InterPro" id="IPR034964">
    <property type="entry name" value="LS"/>
</dbReference>
<dbReference type="InterPro" id="IPR002180">
    <property type="entry name" value="LS/RS"/>
</dbReference>
<dbReference type="InterPro" id="IPR036467">
    <property type="entry name" value="LS/RS_sf"/>
</dbReference>
<dbReference type="NCBIfam" id="TIGR00114">
    <property type="entry name" value="lumazine-synth"/>
    <property type="match status" value="1"/>
</dbReference>
<dbReference type="PANTHER" id="PTHR21058:SF0">
    <property type="entry name" value="6,7-DIMETHYL-8-RIBITYLLUMAZINE SYNTHASE"/>
    <property type="match status" value="1"/>
</dbReference>
<dbReference type="PANTHER" id="PTHR21058">
    <property type="entry name" value="6,7-DIMETHYL-8-RIBITYLLUMAZINE SYNTHASE DMRL SYNTHASE LUMAZINE SYNTHASE"/>
    <property type="match status" value="1"/>
</dbReference>
<dbReference type="Pfam" id="PF00885">
    <property type="entry name" value="DMRL_synthase"/>
    <property type="match status" value="1"/>
</dbReference>
<dbReference type="SUPFAM" id="SSF52121">
    <property type="entry name" value="Lumazine synthase"/>
    <property type="match status" value="1"/>
</dbReference>
<accession>B2RJ75</accession>
<evidence type="ECO:0000255" key="1">
    <source>
        <dbReference type="HAMAP-Rule" id="MF_00178"/>
    </source>
</evidence>
<feature type="chain" id="PRO_1000098216" description="6,7-dimethyl-8-ribityllumazine synthase">
    <location>
        <begin position="1"/>
        <end position="161"/>
    </location>
</feature>
<feature type="active site" description="Proton donor" evidence="1">
    <location>
        <position position="97"/>
    </location>
</feature>
<feature type="binding site" evidence="1">
    <location>
        <position position="31"/>
    </location>
    <ligand>
        <name>5-amino-6-(D-ribitylamino)uracil</name>
        <dbReference type="ChEBI" id="CHEBI:15934"/>
    </ligand>
</feature>
<feature type="binding site" evidence="1">
    <location>
        <begin position="65"/>
        <end position="67"/>
    </location>
    <ligand>
        <name>5-amino-6-(D-ribitylamino)uracil</name>
        <dbReference type="ChEBI" id="CHEBI:15934"/>
    </ligand>
</feature>
<feature type="binding site" evidence="1">
    <location>
        <begin position="89"/>
        <end position="91"/>
    </location>
    <ligand>
        <name>5-amino-6-(D-ribitylamino)uracil</name>
        <dbReference type="ChEBI" id="CHEBI:15934"/>
    </ligand>
</feature>
<feature type="binding site" evidence="1">
    <location>
        <begin position="94"/>
        <end position="95"/>
    </location>
    <ligand>
        <name>(2S)-2-hydroxy-3-oxobutyl phosphate</name>
        <dbReference type="ChEBI" id="CHEBI:58830"/>
    </ligand>
</feature>
<feature type="binding site" evidence="1">
    <location>
        <position position="122"/>
    </location>
    <ligand>
        <name>5-amino-6-(D-ribitylamino)uracil</name>
        <dbReference type="ChEBI" id="CHEBI:15934"/>
    </ligand>
</feature>
<feature type="binding site" evidence="1">
    <location>
        <position position="136"/>
    </location>
    <ligand>
        <name>(2S)-2-hydroxy-3-oxobutyl phosphate</name>
        <dbReference type="ChEBI" id="CHEBI:58830"/>
    </ligand>
</feature>
<protein>
    <recommendedName>
        <fullName evidence="1">6,7-dimethyl-8-ribityllumazine synthase</fullName>
        <shortName evidence="1">DMRL synthase</shortName>
        <shortName evidence="1">LS</shortName>
        <shortName evidence="1">Lumazine synthase</shortName>
        <ecNumber evidence="1">2.5.1.78</ecNumber>
    </recommendedName>
</protein>
<gene>
    <name evidence="1" type="primary">ribH</name>
    <name type="ordered locus">PGN_0901</name>
</gene>